<feature type="chain" id="PRO_0000430969" description="Putative uncharacterized helicase-like protein YHR218W-A">
    <location>
        <begin position="1"/>
        <end position="105"/>
    </location>
</feature>
<feature type="domain" description="Helicase C-terminal" evidence="1">
    <location>
        <begin position="2"/>
        <end position="42"/>
    </location>
</feature>
<organism>
    <name type="scientific">Saccharomyces cerevisiae (strain ATCC 204508 / S288c)</name>
    <name type="common">Baker's yeast</name>
    <dbReference type="NCBI Taxonomy" id="559292"/>
    <lineage>
        <taxon>Eukaryota</taxon>
        <taxon>Fungi</taxon>
        <taxon>Dikarya</taxon>
        <taxon>Ascomycota</taxon>
        <taxon>Saccharomycotina</taxon>
        <taxon>Saccharomycetes</taxon>
        <taxon>Saccharomycetales</taxon>
        <taxon>Saccharomycetaceae</taxon>
        <taxon>Saccharomyces</taxon>
    </lineage>
</organism>
<reference key="1">
    <citation type="journal article" date="1994" name="Science">
        <title>Complete nucleotide sequence of Saccharomyces cerevisiae chromosome VIII.</title>
        <authorList>
            <person name="Johnston M."/>
            <person name="Andrews S."/>
            <person name="Brinkman R."/>
            <person name="Cooper J."/>
            <person name="Ding H."/>
            <person name="Dover J."/>
            <person name="Du Z."/>
            <person name="Favello A."/>
            <person name="Fulton L."/>
            <person name="Gattung S."/>
            <person name="Geisel C."/>
            <person name="Kirsten J."/>
            <person name="Kucaba T."/>
            <person name="Hillier L.W."/>
            <person name="Jier M."/>
            <person name="Johnston L."/>
            <person name="Langston Y."/>
            <person name="Latreille P."/>
            <person name="Louis E.J."/>
            <person name="Macri C."/>
            <person name="Mardis E."/>
            <person name="Menezes S."/>
            <person name="Mouser L."/>
            <person name="Nhan M."/>
            <person name="Rifkin L."/>
            <person name="Riles L."/>
            <person name="St Peter H."/>
            <person name="Trevaskis E."/>
            <person name="Vaughan K."/>
            <person name="Vignati D."/>
            <person name="Wilcox L."/>
            <person name="Wohldman P."/>
            <person name="Waterston R."/>
            <person name="Wilson R."/>
            <person name="Vaudin M."/>
        </authorList>
    </citation>
    <scope>NUCLEOTIDE SEQUENCE [LARGE SCALE GENOMIC DNA]</scope>
    <source>
        <strain>ATCC 204508 / S288c</strain>
    </source>
</reference>
<reference key="2">
    <citation type="journal article" date="2014" name="G3 (Bethesda)">
        <title>The reference genome sequence of Saccharomyces cerevisiae: Then and now.</title>
        <authorList>
            <person name="Engel S.R."/>
            <person name="Dietrich F.S."/>
            <person name="Fisk D.G."/>
            <person name="Binkley G."/>
            <person name="Balakrishnan R."/>
            <person name="Costanzo M.C."/>
            <person name="Dwight S.S."/>
            <person name="Hitz B.C."/>
            <person name="Karra K."/>
            <person name="Nash R.S."/>
            <person name="Weng S."/>
            <person name="Wong E.D."/>
            <person name="Lloyd P."/>
            <person name="Skrzypek M.S."/>
            <person name="Miyasato S.R."/>
            <person name="Simison M."/>
            <person name="Cherry J.M."/>
        </authorList>
    </citation>
    <scope>GENOME REANNOTATION</scope>
    <source>
        <strain>ATCC 204508 / S288c</strain>
    </source>
</reference>
<comment type="similarity">
    <text evidence="2">Belongs to the helicase family. Yeast subtelomeric Y' repeat subfamily.</text>
</comment>
<comment type="caution">
    <text evidence="3">Could be the product of a pseudogene unlikely to encode a functional protein. Although strongly related to DNA helicases, it lacks the helicase ATP-binding domains, suggesting that it has no helicase activity. Because of that it is not part of the S.cerevisiae S288c complete/reference proteome set.</text>
</comment>
<gene>
    <name evidence="4" type="ordered locus">YHR218W-A</name>
</gene>
<name>YH218_YEAST</name>
<dbReference type="EMBL" id="KJ412266">
    <property type="protein sequence ID" value="AHX39309.1"/>
    <property type="molecule type" value="Genomic_DNA"/>
</dbReference>
<dbReference type="RefSeq" id="NP_009438.1">
    <property type="nucleotide sequence ID" value="NM_001180053.1"/>
</dbReference>
<dbReference type="EnsemblFungi" id="YBL112C_mRNA">
    <property type="protein sequence ID" value="YBL112C"/>
    <property type="gene ID" value="YBL112C"/>
</dbReference>
<dbReference type="EnsemblFungi" id="YHR218W-A_mRNA">
    <property type="protein sequence ID" value="YHR218W-A"/>
    <property type="gene ID" value="YHR218W-A"/>
</dbReference>
<dbReference type="KEGG" id="sce:YBL112C"/>
<dbReference type="AGR" id="SGD:S000028786"/>
<dbReference type="SGD" id="S000028786">
    <property type="gene designation" value="YHR218W-A"/>
</dbReference>
<dbReference type="VEuPathDB" id="FungiDB:YBL112C"/>
<dbReference type="HOGENOM" id="CLU_2238726_0_0_1"/>
<dbReference type="OrthoDB" id="4056983at2759"/>
<dbReference type="ExpressionAtlas" id="A0A023PXF5">
    <property type="expression patterns" value="baseline"/>
</dbReference>
<dbReference type="CDD" id="cd18785">
    <property type="entry name" value="SF2_C"/>
    <property type="match status" value="1"/>
</dbReference>
<dbReference type="Gene3D" id="3.40.50.300">
    <property type="entry name" value="P-loop containing nucleotide triphosphate hydrolases"/>
    <property type="match status" value="1"/>
</dbReference>
<dbReference type="InterPro" id="IPR001650">
    <property type="entry name" value="Helicase_C-like"/>
</dbReference>
<dbReference type="InterPro" id="IPR027417">
    <property type="entry name" value="P-loop_NTPase"/>
</dbReference>
<dbReference type="Pfam" id="PF00271">
    <property type="entry name" value="Helicase_C"/>
    <property type="match status" value="1"/>
</dbReference>
<dbReference type="SUPFAM" id="SSF52540">
    <property type="entry name" value="P-loop containing nucleoside triphosphate hydrolases"/>
    <property type="match status" value="1"/>
</dbReference>
<sequence length="105" mass="11974">MQVLIGTKLVTEGIDIKQLMMVIMLDNRLNIIELIQGVGRLRDGGLCYLLSRKNSWAARNRKGELPPIKEGCITEQVREFYGLESKKGKKGPACWMLWLQDRPVC</sequence>
<proteinExistence type="uncertain"/>
<protein>
    <recommendedName>
        <fullName evidence="2">Putative uncharacterized helicase-like protein YHR218W-A</fullName>
    </recommendedName>
</protein>
<evidence type="ECO:0000255" key="1">
    <source>
        <dbReference type="PROSITE-ProRule" id="PRU00542"/>
    </source>
</evidence>
<evidence type="ECO:0000305" key="2"/>
<evidence type="ECO:0000305" key="3">
    <source>
    </source>
</evidence>
<evidence type="ECO:0000312" key="4">
    <source>
        <dbReference type="SGD" id="S000028786"/>
    </source>
</evidence>
<accession>A0A023PXF5</accession>